<reference key="1">
    <citation type="journal article" date="2005" name="J. Bacteriol.">
        <title>Insights on evolution of virulence and resistance from the complete genome analysis of an early methicillin-resistant Staphylococcus aureus strain and a biofilm-producing methicillin-resistant Staphylococcus epidermidis strain.</title>
        <authorList>
            <person name="Gill S.R."/>
            <person name="Fouts D.E."/>
            <person name="Archer G.L."/>
            <person name="Mongodin E.F."/>
            <person name="DeBoy R.T."/>
            <person name="Ravel J."/>
            <person name="Paulsen I.T."/>
            <person name="Kolonay J.F."/>
            <person name="Brinkac L.M."/>
            <person name="Beanan M.J."/>
            <person name="Dodson R.J."/>
            <person name="Daugherty S.C."/>
            <person name="Madupu R."/>
            <person name="Angiuoli S.V."/>
            <person name="Durkin A.S."/>
            <person name="Haft D.H."/>
            <person name="Vamathevan J.J."/>
            <person name="Khouri H."/>
            <person name="Utterback T.R."/>
            <person name="Lee C."/>
            <person name="Dimitrov G."/>
            <person name="Jiang L."/>
            <person name="Qin H."/>
            <person name="Weidman J."/>
            <person name="Tran K."/>
            <person name="Kang K.H."/>
            <person name="Hance I.R."/>
            <person name="Nelson K.E."/>
            <person name="Fraser C.M."/>
        </authorList>
    </citation>
    <scope>NUCLEOTIDE SEQUENCE [LARGE SCALE GENOMIC DNA]</scope>
    <source>
        <strain>COL</strain>
    </source>
</reference>
<feature type="signal peptide" evidence="3">
    <location>
        <begin position="1"/>
        <end position="44"/>
    </location>
</feature>
<feature type="chain" id="PRO_0000042006" description="Clumping factor B">
    <location>
        <begin position="45"/>
        <end position="877"/>
    </location>
</feature>
<feature type="propeptide" id="PRO_0000042007" description="Removed by sortase" evidence="4">
    <location>
        <begin position="878"/>
        <end position="913"/>
    </location>
</feature>
<feature type="region of interest" description="Disordered" evidence="5">
    <location>
        <begin position="44"/>
        <end position="192"/>
    </location>
</feature>
<feature type="region of interest" description="Ligand binding A region" evidence="1">
    <location>
        <begin position="45"/>
        <end position="542"/>
    </location>
</feature>
<feature type="region of interest" description="Disordered" evidence="5">
    <location>
        <begin position="530"/>
        <end position="885"/>
    </location>
</feature>
<feature type="short sequence motif" description="YSIRK-G/S signaling motif" evidence="2">
    <location>
        <begin position="15"/>
        <end position="26"/>
    </location>
</feature>
<feature type="short sequence motif" description="MIDAS-like motif">
    <location>
        <begin position="272"/>
        <end position="276"/>
    </location>
</feature>
<feature type="short sequence motif" description="LPXTG sorting signal" evidence="4">
    <location>
        <begin position="874"/>
        <end position="878"/>
    </location>
</feature>
<feature type="compositionally biased region" description="Polar residues" evidence="5">
    <location>
        <begin position="44"/>
        <end position="61"/>
    </location>
</feature>
<feature type="compositionally biased region" description="Polar residues" evidence="5">
    <location>
        <begin position="68"/>
        <end position="95"/>
    </location>
</feature>
<feature type="compositionally biased region" description="Low complexity" evidence="5">
    <location>
        <begin position="96"/>
        <end position="119"/>
    </location>
</feature>
<feature type="compositionally biased region" description="Polar residues" evidence="5">
    <location>
        <begin position="120"/>
        <end position="189"/>
    </location>
</feature>
<feature type="compositionally biased region" description="Pro residues" evidence="5">
    <location>
        <begin position="545"/>
        <end position="555"/>
    </location>
</feature>
<feature type="compositionally biased region" description="Acidic residues" evidence="5">
    <location>
        <begin position="556"/>
        <end position="837"/>
    </location>
</feature>
<feature type="compositionally biased region" description="Polar residues" evidence="5">
    <location>
        <begin position="841"/>
        <end position="852"/>
    </location>
</feature>
<feature type="compositionally biased region" description="Basic and acidic residues" evidence="5">
    <location>
        <begin position="869"/>
        <end position="882"/>
    </location>
</feature>
<feature type="site" description="Cleavage; by aureolysin" evidence="1">
    <location>
        <begin position="197"/>
        <end position="198"/>
    </location>
</feature>
<feature type="site" description="Cleavage; by aureolysin" evidence="1">
    <location>
        <begin position="199"/>
        <end position="200"/>
    </location>
</feature>
<feature type="modified residue" description="Pentaglycyl murein peptidoglycan amidated threonine" evidence="4">
    <location>
        <position position="877"/>
    </location>
</feature>
<organism>
    <name type="scientific">Staphylococcus aureus (strain COL)</name>
    <dbReference type="NCBI Taxonomy" id="93062"/>
    <lineage>
        <taxon>Bacteria</taxon>
        <taxon>Bacillati</taxon>
        <taxon>Bacillota</taxon>
        <taxon>Bacilli</taxon>
        <taxon>Bacillales</taxon>
        <taxon>Staphylococcaceae</taxon>
        <taxon>Staphylococcus</taxon>
    </lineage>
</organism>
<proteinExistence type="inferred from homology"/>
<protein>
    <recommendedName>
        <fullName>Clumping factor B</fullName>
    </recommendedName>
    <alternativeName>
        <fullName>Fibrinogen receptor B</fullName>
    </alternativeName>
    <alternativeName>
        <fullName>Fibrinogen-binding protein B</fullName>
    </alternativeName>
</protein>
<accession>Q5HCR7</accession>
<evidence type="ECO:0000250" key="1"/>
<evidence type="ECO:0000250" key="2">
    <source>
        <dbReference type="UniProtKB" id="Q2FUY2"/>
    </source>
</evidence>
<evidence type="ECO:0000255" key="3"/>
<evidence type="ECO:0000255" key="4">
    <source>
        <dbReference type="PROSITE-ProRule" id="PRU00477"/>
    </source>
</evidence>
<evidence type="ECO:0000256" key="5">
    <source>
        <dbReference type="SAM" id="MobiDB-lite"/>
    </source>
</evidence>
<evidence type="ECO:0000305" key="6"/>
<dbReference type="EMBL" id="CP000046">
    <property type="protein sequence ID" value="AAW38650.1"/>
    <property type="molecule type" value="Genomic_DNA"/>
</dbReference>
<dbReference type="RefSeq" id="WP_000745871.1">
    <property type="nucleotide sequence ID" value="NZ_JBGOFO010000001.1"/>
</dbReference>
<dbReference type="SMR" id="Q5HCR7"/>
<dbReference type="KEGG" id="sac:SACOL2652"/>
<dbReference type="HOGENOM" id="CLU_004137_2_0_9"/>
<dbReference type="PRO" id="PR:Q5HCR7"/>
<dbReference type="Proteomes" id="UP000000530">
    <property type="component" value="Chromosome"/>
</dbReference>
<dbReference type="GO" id="GO:0005576">
    <property type="term" value="C:extracellular region"/>
    <property type="evidence" value="ECO:0007669"/>
    <property type="project" value="UniProtKB-KW"/>
</dbReference>
<dbReference type="GO" id="GO:0007155">
    <property type="term" value="P:cell adhesion"/>
    <property type="evidence" value="ECO:0007669"/>
    <property type="project" value="InterPro"/>
</dbReference>
<dbReference type="Gene3D" id="2.60.40.1280">
    <property type="match status" value="1"/>
</dbReference>
<dbReference type="Gene3D" id="2.60.40.1290">
    <property type="match status" value="1"/>
</dbReference>
<dbReference type="InterPro" id="IPR011266">
    <property type="entry name" value="Adhesin_Fg-bd_dom_2"/>
</dbReference>
<dbReference type="InterPro" id="IPR008966">
    <property type="entry name" value="Adhesion_dom_sf"/>
</dbReference>
<dbReference type="InterPro" id="IPR011252">
    <property type="entry name" value="Fibrogen-bd_dom1"/>
</dbReference>
<dbReference type="InterPro" id="IPR019931">
    <property type="entry name" value="LPXTG_anchor"/>
</dbReference>
<dbReference type="InterPro" id="IPR050972">
    <property type="entry name" value="SDr-like"/>
</dbReference>
<dbReference type="InterPro" id="IPR041171">
    <property type="entry name" value="SDR_Ig"/>
</dbReference>
<dbReference type="InterPro" id="IPR005877">
    <property type="entry name" value="YSIRK_signal_dom"/>
</dbReference>
<dbReference type="NCBIfam" id="TIGR01167">
    <property type="entry name" value="LPXTG_anchor"/>
    <property type="match status" value="1"/>
</dbReference>
<dbReference type="NCBIfam" id="NF033845">
    <property type="entry name" value="MSCRAMM_ClfB"/>
    <property type="match status" value="1"/>
</dbReference>
<dbReference type="NCBIfam" id="TIGR01168">
    <property type="entry name" value="YSIRK_signal"/>
    <property type="match status" value="1"/>
</dbReference>
<dbReference type="PANTHER" id="PTHR34403">
    <property type="entry name" value="TOL-PAL SYSTEM PROTEIN TOLA"/>
    <property type="match status" value="1"/>
</dbReference>
<dbReference type="PANTHER" id="PTHR34403:SF8">
    <property type="entry name" value="TOL-PAL SYSTEM PROTEIN TOLA"/>
    <property type="match status" value="1"/>
</dbReference>
<dbReference type="Pfam" id="PF17961">
    <property type="entry name" value="Big_8"/>
    <property type="match status" value="1"/>
</dbReference>
<dbReference type="Pfam" id="PF00746">
    <property type="entry name" value="Gram_pos_anchor"/>
    <property type="match status" value="1"/>
</dbReference>
<dbReference type="Pfam" id="PF10425">
    <property type="entry name" value="SdrG_C_C"/>
    <property type="match status" value="1"/>
</dbReference>
<dbReference type="Pfam" id="PF04650">
    <property type="entry name" value="YSIRK_signal"/>
    <property type="match status" value="1"/>
</dbReference>
<dbReference type="SUPFAM" id="SSF49401">
    <property type="entry name" value="Bacterial adhesins"/>
    <property type="match status" value="2"/>
</dbReference>
<dbReference type="PROSITE" id="PS50847">
    <property type="entry name" value="GRAM_POS_ANCHORING"/>
    <property type="match status" value="1"/>
</dbReference>
<sequence>MKKRIDYLSNKQNKYSIRRFTVGTTSVIVGATILFGIGNHQAQASEQSNDTTQSSKNNASADSEKNNMIETPQLNTTANDTSDISANTNSANVDSTTKPMSTQTSNTTTTEPASTNETPQPTAIKNQATAAKMQDQTVPQEANSQVDNKTTNDANSIATNSELKNSQTLDLPQSSPQTISNAQGTSKPSVRTRAVRSLAVAEPVVNAADAKGTNVNDKVTASNFKLEKTTFDPNQSGNTFMAANFTVTDKVKSGDYFTAKLPDSLTGNGDVDYSNSNNTMPIADIKSTNGDVVAKATYDILTKTYTFVFTDYVNNKENINGQFSLPLFTDRAKAPKSGTYDANINIADEMFNNKITYNYSSPIAGIDKPNGANISSQIIGVDTASGQNTYKQTVFVNPKQRVLGNTWVYIKGYQDKIEESSGKVSATDTKLRIFEVNDTSKLSDSYYADPNDSNLKEVTDQFKNRIYYEHPNVASIKFGDITKTYVVLVEGHYDNTGKNLKTQVIQENVDPVTNRDYSIFGWNNENVVRYGGGSADGDSAVNPKDPTPGPPVDPEPSPDPEPEPTPDPEPSPDPEPEPSPDPDPDSDSDSDSGSDSDSGSDSDSESDSDSDSDSDSDSDSDSESDSDSESDSDSDSDSDSDSDSDSDSDSDSDSDSDSDSDSDSESDSDSESDSESDSDSDSDSDSDSDSDSDSDSDSDSDSDSDSDSDSDSDSDSDSDSDSDSDSDSDSDSDSDSDSDSDSDSDSDSDSDSDSDSDSDSDSDSDSDSDSDSDSDSDSDSDSDSDSDSDSDSDSDSDSDSDSDSDSDSDSDSDSDSDSDSDSDSDSDSDSDSDSDSDSDSRVTPPNNEQKAPSNPKGEVNHSNKVSKQHKTDALPETGDKSENTNATLFGAMMALLGSLLLFRKRKQDHKEKA</sequence>
<gene>
    <name type="primary">clfB</name>
    <name type="ordered locus">SACOL2652</name>
</gene>
<comment type="function">
    <text evidence="1">Cell surface-associated protein implicated in virulence by promoting bacterial attachment to both alpha- and beta-chains of human fibrinogen and inducing the formation of bacterial clumps.</text>
</comment>
<comment type="subcellular location">
    <subcellularLocation>
        <location evidence="4">Secreted</location>
        <location evidence="4">Cell wall</location>
        <topology evidence="4">Peptidoglycan-anchor</topology>
    </subcellularLocation>
    <text evidence="2">Anchored to the cell wall by sortase A (By similarity).</text>
</comment>
<comment type="domain">
    <text evidence="1">The Asp/Ser-rich domain functions as a stalk to allow the ligand binding domain to be displayed in a functional form on the cell surface.</text>
</comment>
<comment type="PTM">
    <text evidence="1">Proteolytically cleaved by aureolysin (aur). This cleavage leads to the inactivation of ClfB (By similarity).</text>
</comment>
<comment type="similarity">
    <text evidence="6">Belongs to the serine-aspartate repeat-containing protein (SDr) family.</text>
</comment>
<keyword id="KW-0134">Cell wall</keyword>
<keyword id="KW-0572">Peptidoglycan-anchor</keyword>
<keyword id="KW-0964">Secreted</keyword>
<keyword id="KW-0732">Signal</keyword>
<keyword id="KW-0843">Virulence</keyword>
<name>CLFB_STAAC</name>